<feature type="chain" id="PRO_0000322229" description="Signal recognition particle 19 kDa protein">
    <location>
        <begin position="1"/>
        <end position="89"/>
    </location>
</feature>
<protein>
    <recommendedName>
        <fullName evidence="1">Signal recognition particle 19 kDa protein</fullName>
        <shortName evidence="1">SRP19</shortName>
    </recommendedName>
</protein>
<name>SRP19_METVS</name>
<gene>
    <name evidence="1" type="primary">srp19</name>
    <name type="ordered locus">Mevan_0432</name>
</gene>
<sequence>MKEIVIWPAYFDLKRTKNEGRKVPKSFGVLNPKLKDIVSIIEKMGHEYSIDNKKSYPKEPWEICGYLKVTIDEKTSKLDFLKELCKRMK</sequence>
<dbReference type="EMBL" id="CP000742">
    <property type="protein sequence ID" value="ABR54340.1"/>
    <property type="molecule type" value="Genomic_DNA"/>
</dbReference>
<dbReference type="RefSeq" id="WP_011972243.1">
    <property type="nucleotide sequence ID" value="NC_009634.1"/>
</dbReference>
<dbReference type="SMR" id="A6UPB8"/>
<dbReference type="STRING" id="406327.Mevan_0432"/>
<dbReference type="GeneID" id="5325442"/>
<dbReference type="KEGG" id="mvn:Mevan_0432"/>
<dbReference type="eggNOG" id="arCOG01217">
    <property type="taxonomic scope" value="Archaea"/>
</dbReference>
<dbReference type="HOGENOM" id="CLU_169299_1_0_2"/>
<dbReference type="OrthoDB" id="56356at2157"/>
<dbReference type="Proteomes" id="UP000001107">
    <property type="component" value="Chromosome"/>
</dbReference>
<dbReference type="GO" id="GO:0048500">
    <property type="term" value="C:signal recognition particle"/>
    <property type="evidence" value="ECO:0007669"/>
    <property type="project" value="UniProtKB-UniRule"/>
</dbReference>
<dbReference type="GO" id="GO:0008312">
    <property type="term" value="F:7S RNA binding"/>
    <property type="evidence" value="ECO:0007669"/>
    <property type="project" value="UniProtKB-UniRule"/>
</dbReference>
<dbReference type="GO" id="GO:0006617">
    <property type="term" value="P:SRP-dependent cotranslational protein targeting to membrane, signal sequence recognition"/>
    <property type="evidence" value="ECO:0007669"/>
    <property type="project" value="TreeGrafter"/>
</dbReference>
<dbReference type="Gene3D" id="3.30.56.30">
    <property type="entry name" value="Signal recognition particle, SRP19-like subunit"/>
    <property type="match status" value="1"/>
</dbReference>
<dbReference type="HAMAP" id="MF_00305">
    <property type="entry name" value="SRP19"/>
    <property type="match status" value="1"/>
</dbReference>
<dbReference type="InterPro" id="IPR002778">
    <property type="entry name" value="Signal_recog_particle_SRP19"/>
</dbReference>
<dbReference type="InterPro" id="IPR036521">
    <property type="entry name" value="SRP19-like_sf"/>
</dbReference>
<dbReference type="InterPro" id="IPR022938">
    <property type="entry name" value="SRP19_arc-type"/>
</dbReference>
<dbReference type="PANTHER" id="PTHR17453">
    <property type="entry name" value="SIGNAL RECOGNITION PARTICLE 19 KD PROTEIN"/>
    <property type="match status" value="1"/>
</dbReference>
<dbReference type="PANTHER" id="PTHR17453:SF0">
    <property type="entry name" value="SIGNAL RECOGNITION PARTICLE 19 KDA PROTEIN"/>
    <property type="match status" value="1"/>
</dbReference>
<dbReference type="Pfam" id="PF01922">
    <property type="entry name" value="SRP19"/>
    <property type="match status" value="1"/>
</dbReference>
<dbReference type="SUPFAM" id="SSF69695">
    <property type="entry name" value="SRP19"/>
    <property type="match status" value="1"/>
</dbReference>
<accession>A6UPB8</accession>
<keyword id="KW-0963">Cytoplasm</keyword>
<keyword id="KW-0687">Ribonucleoprotein</keyword>
<keyword id="KW-0694">RNA-binding</keyword>
<keyword id="KW-0733">Signal recognition particle</keyword>
<organism>
    <name type="scientific">Methanococcus vannielii (strain ATCC 35089 / DSM 1224 / JCM 13029 / OCM 148 / SB)</name>
    <dbReference type="NCBI Taxonomy" id="406327"/>
    <lineage>
        <taxon>Archaea</taxon>
        <taxon>Methanobacteriati</taxon>
        <taxon>Methanobacteriota</taxon>
        <taxon>Methanomada group</taxon>
        <taxon>Methanococci</taxon>
        <taxon>Methanococcales</taxon>
        <taxon>Methanococcaceae</taxon>
        <taxon>Methanococcus</taxon>
    </lineage>
</organism>
<comment type="function">
    <text evidence="1">Involved in targeting and insertion of nascent membrane proteins into the cytoplasmic membrane. Binds directly to 7S RNA and mediates binding of the 54 kDa subunit of the SRP.</text>
</comment>
<comment type="subunit">
    <text evidence="1">Part of the signal recognition particle protein translocation system, which is composed of SRP and FtsY. Archaeal SRP consists of a 7S RNA molecule of 300 nucleotides and two protein subunits: SRP54 and SRP19.</text>
</comment>
<comment type="subcellular location">
    <subcellularLocation>
        <location evidence="1">Cytoplasm</location>
    </subcellularLocation>
</comment>
<comment type="similarity">
    <text evidence="1">Belongs to the SRP19 family.</text>
</comment>
<proteinExistence type="inferred from homology"/>
<reference key="1">
    <citation type="submission" date="2007-06" db="EMBL/GenBank/DDBJ databases">
        <title>Complete sequence of Methanococcus vannielii SB.</title>
        <authorList>
            <consortium name="US DOE Joint Genome Institute"/>
            <person name="Copeland A."/>
            <person name="Lucas S."/>
            <person name="Lapidus A."/>
            <person name="Barry K."/>
            <person name="Glavina del Rio T."/>
            <person name="Dalin E."/>
            <person name="Tice H."/>
            <person name="Pitluck S."/>
            <person name="Chain P."/>
            <person name="Malfatti S."/>
            <person name="Shin M."/>
            <person name="Vergez L."/>
            <person name="Schmutz J."/>
            <person name="Larimer F."/>
            <person name="Land M."/>
            <person name="Hauser L."/>
            <person name="Kyrpides N."/>
            <person name="Anderson I."/>
            <person name="Sieprawska-Lupa M."/>
            <person name="Whitman W.B."/>
            <person name="Richardson P."/>
        </authorList>
    </citation>
    <scope>NUCLEOTIDE SEQUENCE [LARGE SCALE GENOMIC DNA]</scope>
    <source>
        <strain>ATCC 35089 / DSM 1224 / JCM 13029 / OCM 148 / SB</strain>
    </source>
</reference>
<evidence type="ECO:0000255" key="1">
    <source>
        <dbReference type="HAMAP-Rule" id="MF_00305"/>
    </source>
</evidence>